<feature type="chain" id="PRO_0000284060" description="Eukaryotic translation initiation factor 3 subunit J">
    <location>
        <begin position="1"/>
        <end position="256"/>
    </location>
</feature>
<feature type="region of interest" description="Disordered" evidence="3">
    <location>
        <begin position="1"/>
        <end position="106"/>
    </location>
</feature>
<feature type="region of interest" description="Sufficient for interaction with EIF3B" evidence="2">
    <location>
        <begin position="1"/>
        <end position="67"/>
    </location>
</feature>
<feature type="region of interest" description="Disordered" evidence="3">
    <location>
        <begin position="214"/>
        <end position="243"/>
    </location>
</feature>
<feature type="region of interest" description="Promotes stable association with the 40S ribosome" evidence="2">
    <location>
        <begin position="241"/>
        <end position="256"/>
    </location>
</feature>
<feature type="coiled-coil region" evidence="2">
    <location>
        <begin position="68"/>
        <end position="133"/>
    </location>
</feature>
<feature type="compositionally biased region" description="Acidic residues" evidence="3">
    <location>
        <begin position="38"/>
        <end position="57"/>
    </location>
</feature>
<feature type="compositionally biased region" description="Basic and acidic residues" evidence="3">
    <location>
        <begin position="58"/>
        <end position="104"/>
    </location>
</feature>
<feature type="modified residue" description="Phosphoserine" evidence="1 2">
    <location>
        <position position="9"/>
    </location>
</feature>
<feature type="modified residue" description="Phosphoserine" evidence="1 2">
    <location>
        <position position="11"/>
    </location>
</feature>
<feature type="modified residue" description="Phosphoserine" evidence="1 2">
    <location>
        <position position="18"/>
    </location>
</feature>
<feature type="modified residue" description="Phosphothreonine" evidence="1 2">
    <location>
        <position position="107"/>
    </location>
</feature>
<feature type="modified residue" description="Phosphoserine" evidence="1 2">
    <location>
        <position position="125"/>
    </location>
</feature>
<feature type="modified residue" description="Phosphotyrosine" evidence="1">
    <location>
        <position position="252"/>
    </location>
</feature>
<feature type="cross-link" description="Glycyl lysine isopeptide (Lys-Gly) (interchain with G-Cter in SUMO2)" evidence="1">
    <location>
        <position position="104"/>
    </location>
</feature>
<protein>
    <recommendedName>
        <fullName evidence="2">Eukaryotic translation initiation factor 3 subunit J</fullName>
        <shortName evidence="2">eIF3j</shortName>
    </recommendedName>
    <alternativeName>
        <fullName evidence="2">Eukaryotic translation initiation factor 3 subunit 1</fullName>
    </alternativeName>
    <alternativeName>
        <fullName evidence="2">eIF-3-alpha</fullName>
    </alternativeName>
    <alternativeName>
        <fullName evidence="2">eIF3 p35</fullName>
    </alternativeName>
</protein>
<keyword id="KW-0175">Coiled coil</keyword>
<keyword id="KW-0963">Cytoplasm</keyword>
<keyword id="KW-0396">Initiation factor</keyword>
<keyword id="KW-1017">Isopeptide bond</keyword>
<keyword id="KW-0597">Phosphoprotein</keyword>
<keyword id="KW-0648">Protein biosynthesis</keyword>
<keyword id="KW-1185">Reference proteome</keyword>
<keyword id="KW-0832">Ubl conjugation</keyword>
<dbReference type="EMBL" id="BC119989">
    <property type="protein sequence ID" value="AAI19990.1"/>
    <property type="molecule type" value="mRNA"/>
</dbReference>
<dbReference type="EMBL" id="BC149417">
    <property type="protein sequence ID" value="AAI49418.1"/>
    <property type="molecule type" value="mRNA"/>
</dbReference>
<dbReference type="RefSeq" id="NP_001069611.1">
    <property type="nucleotide sequence ID" value="NM_001076143.1"/>
</dbReference>
<dbReference type="SMR" id="Q0VCU8"/>
<dbReference type="FunCoup" id="Q0VCU8">
    <property type="interactions" value="2963"/>
</dbReference>
<dbReference type="STRING" id="9913.ENSBTAP00000000465"/>
<dbReference type="PaxDb" id="9913-ENSBTAP00000000465"/>
<dbReference type="GeneID" id="539052"/>
<dbReference type="KEGG" id="bta:539052"/>
<dbReference type="CTD" id="8669"/>
<dbReference type="VEuPathDB" id="HostDB:ENSBTAG00000000359"/>
<dbReference type="eggNOG" id="KOG4813">
    <property type="taxonomic scope" value="Eukaryota"/>
</dbReference>
<dbReference type="HOGENOM" id="CLU_085806_2_1_1"/>
<dbReference type="InParanoid" id="Q0VCU8"/>
<dbReference type="OMA" id="KPHYALW"/>
<dbReference type="OrthoDB" id="20381at2759"/>
<dbReference type="Reactome" id="R-BTA-156827">
    <property type="pathway name" value="L13a-mediated translational silencing of Ceruloplasmin expression"/>
</dbReference>
<dbReference type="Reactome" id="R-BTA-72649">
    <property type="pathway name" value="Translation initiation complex formation"/>
</dbReference>
<dbReference type="Reactome" id="R-BTA-72689">
    <property type="pathway name" value="Formation of a pool of free 40S subunits"/>
</dbReference>
<dbReference type="Reactome" id="R-BTA-72695">
    <property type="pathway name" value="Formation of the ternary complex, and subsequently, the 43S complex"/>
</dbReference>
<dbReference type="Reactome" id="R-BTA-72702">
    <property type="pathway name" value="Ribosomal scanning and start codon recognition"/>
</dbReference>
<dbReference type="Proteomes" id="UP000009136">
    <property type="component" value="Chromosome 10"/>
</dbReference>
<dbReference type="Bgee" id="ENSBTAG00000000359">
    <property type="expression patterns" value="Expressed in longissimus thoracis muscle and 105 other cell types or tissues"/>
</dbReference>
<dbReference type="GO" id="GO:0005829">
    <property type="term" value="C:cytosol"/>
    <property type="evidence" value="ECO:0007669"/>
    <property type="project" value="Ensembl"/>
</dbReference>
<dbReference type="GO" id="GO:0016282">
    <property type="term" value="C:eukaryotic 43S preinitiation complex"/>
    <property type="evidence" value="ECO:0007669"/>
    <property type="project" value="UniProtKB-UniRule"/>
</dbReference>
<dbReference type="GO" id="GO:0033290">
    <property type="term" value="C:eukaryotic 48S preinitiation complex"/>
    <property type="evidence" value="ECO:0007669"/>
    <property type="project" value="UniProtKB-UniRule"/>
</dbReference>
<dbReference type="GO" id="GO:0005852">
    <property type="term" value="C:eukaryotic translation initiation factor 3 complex"/>
    <property type="evidence" value="ECO:0000250"/>
    <property type="project" value="UniProtKB"/>
</dbReference>
<dbReference type="GO" id="GO:0042802">
    <property type="term" value="F:identical protein binding"/>
    <property type="evidence" value="ECO:0007669"/>
    <property type="project" value="Ensembl"/>
</dbReference>
<dbReference type="GO" id="GO:0003743">
    <property type="term" value="F:translation initiation factor activity"/>
    <property type="evidence" value="ECO:0007669"/>
    <property type="project" value="UniProtKB-UniRule"/>
</dbReference>
<dbReference type="GO" id="GO:0001732">
    <property type="term" value="P:formation of cytoplasmic translation initiation complex"/>
    <property type="evidence" value="ECO:0007669"/>
    <property type="project" value="UniProtKB-UniRule"/>
</dbReference>
<dbReference type="FunFam" id="1.10.246.60:FF:000001">
    <property type="entry name" value="Eukaryotic translation initiation factor 3 subunit J"/>
    <property type="match status" value="1"/>
</dbReference>
<dbReference type="Gene3D" id="1.10.246.60">
    <property type="entry name" value="Eukaryotic translation initiation factor 3 like domains"/>
    <property type="match status" value="1"/>
</dbReference>
<dbReference type="HAMAP" id="MF_03009">
    <property type="entry name" value="eIF3j"/>
    <property type="match status" value="1"/>
</dbReference>
<dbReference type="InterPro" id="IPR023194">
    <property type="entry name" value="eIF3-like_dom_sf"/>
</dbReference>
<dbReference type="InterPro" id="IPR013906">
    <property type="entry name" value="eIF3j"/>
</dbReference>
<dbReference type="PANTHER" id="PTHR21681">
    <property type="entry name" value="EUKARYOTIC TRANSLATION INITIATION FACTOR 3 SUBUNIT J"/>
    <property type="match status" value="1"/>
</dbReference>
<dbReference type="PANTHER" id="PTHR21681:SF0">
    <property type="entry name" value="EUKARYOTIC TRANSLATION INITIATION FACTOR 3 SUBUNIT J"/>
    <property type="match status" value="1"/>
</dbReference>
<dbReference type="Pfam" id="PF08597">
    <property type="entry name" value="eIF3_subunit"/>
    <property type="match status" value="1"/>
</dbReference>
<comment type="function">
    <text evidence="2">Component of the eukaryotic translation initiation factor 3 (eIF-3) complex, which is required for several steps in the initiation of protein synthesis. The eIF-3 complex associates with the 40S ribosome and facilitates the recruitment of eIF-1, eIF-1A, eIF-2:GTP:methionyl-tRNAi and eIF-5 to form the 43S pre-initiation complex (43S PIC). The eIF-3 complex stimulates mRNA recruitment to the 43S PIC and scanning of the mRNA for AUG recognition. The eIF-3 complex is also required for disassembly and recycling of post-termination ribosomal complexes and subsequently prevents premature joining of the 40S and 60S ribosomal subunits prior to initiation. The eIF-3 complex specifically targets and initiates translation of a subset of mRNAs involved in cell proliferation, including cell cycling, differentiation and apoptosis, and uses different modes of RNA stem-loop binding to exert either translational activation or repression. This subunit binds directly within the mRNA entry channel of the 40S ribosome to the aminoacyl (A) site. It may regulate the interaction between the 43S PIC and mRNA.</text>
</comment>
<comment type="subunit">
    <text evidence="2">Component of the eukaryotic translation initiation factor 3 (eIF-3) complex, which is composed of 13 subunits: EIF3A, EIF3B, EIF3C, EIF3D, EIF3E, EIF3F, EIF3G, EIF3H, EIF3I, EIF3J, EIF3K, EIF3L and EIF3M. The eIF-3 complex appears to include 3 stable modules: module A is composed of EIF3A, EIF3B, EIF3G and EIF3I; module B is composed of EIF3F, EIF3H, and EIF3M; and module C is composed of EIF3C, EIF3D, EIF3E, EIF3K and EIF3L. EIF3C of module C binds EIF3B of module A and EIF3H of module B, thereby linking the three modules. EIF3J is a labile subunit that binds to the eIF-3 complex via EIF3B. The eIF-3 complex interacts with RPS6KB1 under conditions of nutrient depletion. Mitogenic stimulation leads to binding and activation of a complex composed of MTOR and RPTOR, leading to phosphorylation and release of RPS6KB1 and binding of EIF4B to eIF-3.</text>
</comment>
<comment type="subcellular location">
    <subcellularLocation>
        <location evidence="2">Cytoplasm</location>
    </subcellularLocation>
</comment>
<comment type="PTM">
    <text evidence="2">Phosphorylated. Phosphorylation is enhanced upon serum stimulation.</text>
</comment>
<comment type="similarity">
    <text evidence="2">Belongs to the eIF-3 subunit J family.</text>
</comment>
<evidence type="ECO:0000250" key="1">
    <source>
        <dbReference type="UniProtKB" id="O75822"/>
    </source>
</evidence>
<evidence type="ECO:0000255" key="2">
    <source>
        <dbReference type="HAMAP-Rule" id="MF_03009"/>
    </source>
</evidence>
<evidence type="ECO:0000256" key="3">
    <source>
        <dbReference type="SAM" id="MobiDB-lite"/>
    </source>
</evidence>
<proteinExistence type="evidence at transcript level"/>
<organism>
    <name type="scientific">Bos taurus</name>
    <name type="common">Bovine</name>
    <dbReference type="NCBI Taxonomy" id="9913"/>
    <lineage>
        <taxon>Eukaryota</taxon>
        <taxon>Metazoa</taxon>
        <taxon>Chordata</taxon>
        <taxon>Craniata</taxon>
        <taxon>Vertebrata</taxon>
        <taxon>Euteleostomi</taxon>
        <taxon>Mammalia</taxon>
        <taxon>Eutheria</taxon>
        <taxon>Laurasiatheria</taxon>
        <taxon>Artiodactyla</taxon>
        <taxon>Ruminantia</taxon>
        <taxon>Pecora</taxon>
        <taxon>Bovidae</taxon>
        <taxon>Bovinae</taxon>
        <taxon>Bos</taxon>
    </lineage>
</organism>
<gene>
    <name evidence="2" type="primary">EIF3J</name>
    <name evidence="2" type="synonym">EIF3S1</name>
</gene>
<name>EIF3J_BOVIN</name>
<accession>Q0VCU8</accession>
<accession>A6QPP4</accession>
<sequence>MAAAAAGDSDSWDADTFSVEDPVRKVGGGGTAGGDRWEGEDEDEDVKDNWDDDDDEKKEEAEVKPEVKISEKKKIAEKIKEKERQQKKRQEEIKKRLEEPEEPKVLTPEEQLADKLRLKKLQEESDLELAKETFGVNNTVYGIDAMNPSSRDDFTEFGKLLKDKITQYEKSLYYANFLEALVRDVCISLEIDDLKKITNSLTVLCSEKQKQEKQSKAKKKKKGVVPGGGLKATMKDDLADYGGYDGGYAQDYEDFM</sequence>
<reference key="1">
    <citation type="submission" date="2007-07" db="EMBL/GenBank/DDBJ databases">
        <authorList>
            <consortium name="NIH - Mammalian Gene Collection (MGC) project"/>
        </authorList>
    </citation>
    <scope>NUCLEOTIDE SEQUENCE [LARGE SCALE MRNA]</scope>
    <source>
        <strain>Hereford</strain>
        <tissue>Fetal muscle</tissue>
        <tissue>Fetal pons</tissue>
    </source>
</reference>